<accession>P77808</accession>
<dbReference type="EMBL" id="U00096">
    <property type="protein sequence ID" value="AAC75309.1"/>
    <property type="molecule type" value="Genomic_DNA"/>
</dbReference>
<dbReference type="EMBL" id="AP009048">
    <property type="protein sequence ID" value="BAA16073.1"/>
    <property type="molecule type" value="Genomic_DNA"/>
</dbReference>
<dbReference type="PIR" id="G64995">
    <property type="entry name" value="G64995"/>
</dbReference>
<dbReference type="RefSeq" id="NP_416752.1">
    <property type="nucleotide sequence ID" value="NC_000913.3"/>
</dbReference>
<dbReference type="RefSeq" id="WP_000921621.1">
    <property type="nucleotide sequence ID" value="NZ_LN832404.1"/>
</dbReference>
<dbReference type="SMR" id="P77808"/>
<dbReference type="BioGRID" id="4261213">
    <property type="interactions" value="26"/>
</dbReference>
<dbReference type="BioGRID" id="849852">
    <property type="interactions" value="1"/>
</dbReference>
<dbReference type="DIP" id="DIP-9281N"/>
<dbReference type="FunCoup" id="P77808">
    <property type="interactions" value="186"/>
</dbReference>
<dbReference type="IntAct" id="P77808">
    <property type="interactions" value="6"/>
</dbReference>
<dbReference type="STRING" id="511145.b2249"/>
<dbReference type="jPOST" id="P77808"/>
<dbReference type="PaxDb" id="511145-b2249"/>
<dbReference type="EnsemblBacteria" id="AAC75309">
    <property type="protein sequence ID" value="AAC75309"/>
    <property type="gene ID" value="b2249"/>
</dbReference>
<dbReference type="GeneID" id="945478"/>
<dbReference type="KEGG" id="ecj:JW2243"/>
<dbReference type="KEGG" id="eco:b2249"/>
<dbReference type="KEGG" id="ecoc:C3026_12565"/>
<dbReference type="PATRIC" id="fig|511145.12.peg.2340"/>
<dbReference type="EchoBASE" id="EB3840"/>
<dbReference type="eggNOG" id="COG1058">
    <property type="taxonomic scope" value="Bacteria"/>
</dbReference>
<dbReference type="HOGENOM" id="CLU_030805_9_1_6"/>
<dbReference type="InParanoid" id="P77808"/>
<dbReference type="OMA" id="TAPGMIW"/>
<dbReference type="OrthoDB" id="9801454at2"/>
<dbReference type="PhylomeDB" id="P77808"/>
<dbReference type="BioCyc" id="EcoCyc:G7162-MONOMER"/>
<dbReference type="PRO" id="PR:P77808"/>
<dbReference type="Proteomes" id="UP000000625">
    <property type="component" value="Chromosome"/>
</dbReference>
<dbReference type="CDD" id="cd00885">
    <property type="entry name" value="cinA"/>
    <property type="match status" value="1"/>
</dbReference>
<dbReference type="Gene3D" id="3.40.980.10">
    <property type="entry name" value="MoaB/Mog-like domain"/>
    <property type="match status" value="1"/>
</dbReference>
<dbReference type="HAMAP" id="MF_00226_B">
    <property type="entry name" value="CinA_B"/>
    <property type="match status" value="1"/>
</dbReference>
<dbReference type="InterPro" id="IPR050101">
    <property type="entry name" value="CinA"/>
</dbReference>
<dbReference type="InterPro" id="IPR036653">
    <property type="entry name" value="CinA-like_C"/>
</dbReference>
<dbReference type="InterPro" id="IPR008135">
    <property type="entry name" value="Competence-induced_CinA"/>
</dbReference>
<dbReference type="InterPro" id="IPR036425">
    <property type="entry name" value="MoaB/Mog-like_dom_sf"/>
</dbReference>
<dbReference type="InterPro" id="IPR001453">
    <property type="entry name" value="MoaB/Mog_dom"/>
</dbReference>
<dbReference type="NCBIfam" id="TIGR00200">
    <property type="entry name" value="cinA_nterm"/>
    <property type="match status" value="1"/>
</dbReference>
<dbReference type="NCBIfam" id="TIGR00177">
    <property type="entry name" value="molyb_syn"/>
    <property type="match status" value="1"/>
</dbReference>
<dbReference type="NCBIfam" id="NF002978">
    <property type="entry name" value="PRK03673.1"/>
    <property type="match status" value="1"/>
</dbReference>
<dbReference type="PANTHER" id="PTHR13939">
    <property type="entry name" value="NICOTINAMIDE-NUCLEOTIDE AMIDOHYDROLASE PNCC"/>
    <property type="match status" value="1"/>
</dbReference>
<dbReference type="PANTHER" id="PTHR13939:SF0">
    <property type="entry name" value="NMN AMIDOHYDROLASE-LIKE PROTEIN YFAY"/>
    <property type="match status" value="1"/>
</dbReference>
<dbReference type="Pfam" id="PF00994">
    <property type="entry name" value="MoCF_biosynth"/>
    <property type="match status" value="1"/>
</dbReference>
<dbReference type="PIRSF" id="PIRSF006728">
    <property type="entry name" value="CinA"/>
    <property type="match status" value="1"/>
</dbReference>
<dbReference type="SMART" id="SM00852">
    <property type="entry name" value="MoCF_biosynth"/>
    <property type="match status" value="1"/>
</dbReference>
<dbReference type="SUPFAM" id="SSF142433">
    <property type="entry name" value="CinA-like"/>
    <property type="match status" value="1"/>
</dbReference>
<dbReference type="SUPFAM" id="SSF53218">
    <property type="entry name" value="Molybdenum cofactor biosynthesis proteins"/>
    <property type="match status" value="1"/>
</dbReference>
<name>CINAL_ECOLI</name>
<protein>
    <recommendedName>
        <fullName>NMN amidohydrolase-like protein YfaY</fullName>
    </recommendedName>
</protein>
<reference key="1">
    <citation type="journal article" date="1997" name="DNA Res.">
        <title>Construction of a contiguous 874-kb sequence of the Escherichia coli-K12 genome corresponding to 50.0-68.8 min on the linkage map and analysis of its sequence features.</title>
        <authorList>
            <person name="Yamamoto Y."/>
            <person name="Aiba H."/>
            <person name="Baba T."/>
            <person name="Hayashi K."/>
            <person name="Inada T."/>
            <person name="Isono K."/>
            <person name="Itoh T."/>
            <person name="Kimura S."/>
            <person name="Kitagawa M."/>
            <person name="Makino K."/>
            <person name="Miki T."/>
            <person name="Mitsuhashi N."/>
            <person name="Mizobuchi K."/>
            <person name="Mori H."/>
            <person name="Nakade S."/>
            <person name="Nakamura Y."/>
            <person name="Nashimoto H."/>
            <person name="Oshima T."/>
            <person name="Oyama S."/>
            <person name="Saito N."/>
            <person name="Sampei G."/>
            <person name="Satoh Y."/>
            <person name="Sivasundaram S."/>
            <person name="Tagami H."/>
            <person name="Takahashi H."/>
            <person name="Takeda J."/>
            <person name="Takemoto K."/>
            <person name="Uehara K."/>
            <person name="Wada C."/>
            <person name="Yamagata S."/>
            <person name="Horiuchi T."/>
        </authorList>
    </citation>
    <scope>NUCLEOTIDE SEQUENCE [LARGE SCALE GENOMIC DNA]</scope>
    <source>
        <strain>K12 / W3110 / ATCC 27325 / DSM 5911</strain>
    </source>
</reference>
<reference key="2">
    <citation type="journal article" date="1997" name="Science">
        <title>The complete genome sequence of Escherichia coli K-12.</title>
        <authorList>
            <person name="Blattner F.R."/>
            <person name="Plunkett G. III"/>
            <person name="Bloch C.A."/>
            <person name="Perna N.T."/>
            <person name="Burland V."/>
            <person name="Riley M."/>
            <person name="Collado-Vides J."/>
            <person name="Glasner J.D."/>
            <person name="Rode C.K."/>
            <person name="Mayhew G.F."/>
            <person name="Gregor J."/>
            <person name="Davis N.W."/>
            <person name="Kirkpatrick H.A."/>
            <person name="Goeden M.A."/>
            <person name="Rose D.J."/>
            <person name="Mau B."/>
            <person name="Shao Y."/>
        </authorList>
    </citation>
    <scope>NUCLEOTIDE SEQUENCE [LARGE SCALE GENOMIC DNA]</scope>
    <source>
        <strain>K12 / MG1655 / ATCC 47076</strain>
    </source>
</reference>
<reference key="3">
    <citation type="journal article" date="2006" name="Mol. Syst. Biol.">
        <title>Highly accurate genome sequences of Escherichia coli K-12 strains MG1655 and W3110.</title>
        <authorList>
            <person name="Hayashi K."/>
            <person name="Morooka N."/>
            <person name="Yamamoto Y."/>
            <person name="Fujita K."/>
            <person name="Isono K."/>
            <person name="Choi S."/>
            <person name="Ohtsubo E."/>
            <person name="Baba T."/>
            <person name="Wanner B.L."/>
            <person name="Mori H."/>
            <person name="Horiuchi T."/>
        </authorList>
    </citation>
    <scope>NUCLEOTIDE SEQUENCE [LARGE SCALE GENOMIC DNA]</scope>
    <source>
        <strain>K12 / W3110 / ATCC 27325 / DSM 5911</strain>
    </source>
</reference>
<reference key="4">
    <citation type="journal article" date="2011" name="J. Biol. Chem.">
        <title>Identification of nicotinamide mononucleotide deamidase of the bacterial pyridine nucleotide cycle reveals a novel broadly conserved amidohydrolase family.</title>
        <authorList>
            <person name="Galeazzi L."/>
            <person name="Bocci P."/>
            <person name="Amici A."/>
            <person name="Brunetti L."/>
            <person name="Ruggieri S."/>
            <person name="Romine M."/>
            <person name="Reed S."/>
            <person name="Osterman A.L."/>
            <person name="Rodionov D.A."/>
            <person name="Sorci L."/>
            <person name="Raffaelli N."/>
        </authorList>
    </citation>
    <scope>LACK OF NMN AMIDOHYDROLASE FUNCTION</scope>
    <source>
        <strain>K12</strain>
    </source>
</reference>
<feature type="chain" id="PRO_0000156758" description="NMN amidohydrolase-like protein YfaY">
    <location>
        <begin position="1"/>
        <end position="400"/>
    </location>
</feature>
<proteinExistence type="inferred from homology"/>
<keyword id="KW-1185">Reference proteome</keyword>
<sequence>MLKVEMLSTGDEVLHGQIVDTNAAWLADFFFHQGLPLSRRNTVGDNLDDLVTILRERSQHADVLIVNGGLGPTSDDLSALAAATAKGEGLVLHEAWLKEMERYFHERGRVMAPSNRKQAELPASAEFINNPVGTACGFAVQLNRCLMFFTPGVPSEFKVMVEHEILPRLRERFSLPQPPVCLRLTTFGRSESDLAQSLDTLQLPPGVTMGYRSSMPIIELKLTGPASEQQAMEKLWLDVKRVAGQSVIFEGTEGLPAQISRELQNRQFSLTLSEQFTGGLLALQLSRAGAPLLACEVVPSQEETLAQTAHWITERRANHFAGLALAVSGFENEHLNFALATPDGTFALRVRFSTTRYSLAIRQEVCAMMALNMLRRWLNGQDIASEHGWIEVVESMTLSV</sequence>
<evidence type="ECO:0000255" key="1">
    <source>
        <dbReference type="HAMAP-Rule" id="MF_00226"/>
    </source>
</evidence>
<organism>
    <name type="scientific">Escherichia coli (strain K12)</name>
    <dbReference type="NCBI Taxonomy" id="83333"/>
    <lineage>
        <taxon>Bacteria</taxon>
        <taxon>Pseudomonadati</taxon>
        <taxon>Pseudomonadota</taxon>
        <taxon>Gammaproteobacteria</taxon>
        <taxon>Enterobacterales</taxon>
        <taxon>Enterobacteriaceae</taxon>
        <taxon>Escherichia</taxon>
    </lineage>
</organism>
<comment type="function">
    <text>Does not have nicotinamide-nucleotide (NMN) amidohydrolase activity.</text>
</comment>
<comment type="similarity">
    <text evidence="1">Belongs to the CinA family.</text>
</comment>
<gene>
    <name type="primary">yfaY</name>
    <name type="ordered locus">b2249</name>
    <name type="ordered locus">JW2243</name>
</gene>